<evidence type="ECO:0000255" key="1">
    <source>
        <dbReference type="HAMAP-Rule" id="MF_00204"/>
    </source>
</evidence>
<reference key="1">
    <citation type="journal article" date="2006" name="Proc. Natl. Acad. Sci. U.S.A.">
        <title>Comparative genomics of the lactic acid bacteria.</title>
        <authorList>
            <person name="Makarova K.S."/>
            <person name="Slesarev A."/>
            <person name="Wolf Y.I."/>
            <person name="Sorokin A."/>
            <person name="Mirkin B."/>
            <person name="Koonin E.V."/>
            <person name="Pavlov A."/>
            <person name="Pavlova N."/>
            <person name="Karamychev V."/>
            <person name="Polouchine N."/>
            <person name="Shakhova V."/>
            <person name="Grigoriev I."/>
            <person name="Lou Y."/>
            <person name="Rohksar D."/>
            <person name="Lucas S."/>
            <person name="Huang K."/>
            <person name="Goodstein D.M."/>
            <person name="Hawkins T."/>
            <person name="Plengvidhya V."/>
            <person name="Welker D."/>
            <person name="Hughes J."/>
            <person name="Goh Y."/>
            <person name="Benson A."/>
            <person name="Baldwin K."/>
            <person name="Lee J.-H."/>
            <person name="Diaz-Muniz I."/>
            <person name="Dosti B."/>
            <person name="Smeianov V."/>
            <person name="Wechter W."/>
            <person name="Barabote R."/>
            <person name="Lorca G."/>
            <person name="Altermann E."/>
            <person name="Barrangou R."/>
            <person name="Ganesan B."/>
            <person name="Xie Y."/>
            <person name="Rawsthorne H."/>
            <person name="Tamir D."/>
            <person name="Parker C."/>
            <person name="Breidt F."/>
            <person name="Broadbent J.R."/>
            <person name="Hutkins R."/>
            <person name="O'Sullivan D."/>
            <person name="Steele J."/>
            <person name="Unlu G."/>
            <person name="Saier M.H. Jr."/>
            <person name="Klaenhammer T."/>
            <person name="Richardson P."/>
            <person name="Kozyavkin S."/>
            <person name="Weimer B.C."/>
            <person name="Mills D.A."/>
        </authorList>
    </citation>
    <scope>NUCLEOTIDE SEQUENCE [LARGE SCALE GENOMIC DNA]</scope>
    <source>
        <strain>SK11</strain>
    </source>
</reference>
<feature type="chain" id="PRO_1000077900" description="UvrABC system protein B">
    <location>
        <begin position="1"/>
        <end position="692"/>
    </location>
</feature>
<feature type="domain" description="Helicase ATP-binding" evidence="1">
    <location>
        <begin position="32"/>
        <end position="187"/>
    </location>
</feature>
<feature type="domain" description="Helicase C-terminal" evidence="1">
    <location>
        <begin position="436"/>
        <end position="631"/>
    </location>
</feature>
<feature type="domain" description="UVR" evidence="1">
    <location>
        <begin position="656"/>
        <end position="691"/>
    </location>
</feature>
<feature type="short sequence motif" description="Beta-hairpin">
    <location>
        <begin position="98"/>
        <end position="121"/>
    </location>
</feature>
<feature type="binding site" evidence="1">
    <location>
        <begin position="45"/>
        <end position="52"/>
    </location>
    <ligand>
        <name>ATP</name>
        <dbReference type="ChEBI" id="CHEBI:30616"/>
    </ligand>
</feature>
<comment type="function">
    <text evidence="1">The UvrABC repair system catalyzes the recognition and processing of DNA lesions. A damage recognition complex composed of 2 UvrA and 2 UvrB subunits scans DNA for abnormalities. Upon binding of the UvrA(2)B(2) complex to a putative damaged site, the DNA wraps around one UvrB monomer. DNA wrap is dependent on ATP binding by UvrB and probably causes local melting of the DNA helix, facilitating insertion of UvrB beta-hairpin between the DNA strands. Then UvrB probes one DNA strand for the presence of a lesion. If a lesion is found the UvrA subunits dissociate and the UvrB-DNA preincision complex is formed. This complex is subsequently bound by UvrC and the second UvrB is released. If no lesion is found, the DNA wraps around the other UvrB subunit that will check the other stand for damage.</text>
</comment>
<comment type="subunit">
    <text evidence="1">Forms a heterotetramer with UvrA during the search for lesions. Interacts with UvrC in an incision complex.</text>
</comment>
<comment type="subcellular location">
    <subcellularLocation>
        <location evidence="1">Cytoplasm</location>
    </subcellularLocation>
</comment>
<comment type="domain">
    <text evidence="1">The beta-hairpin motif is involved in DNA binding.</text>
</comment>
<comment type="similarity">
    <text evidence="1">Belongs to the UvrB family.</text>
</comment>
<keyword id="KW-0067">ATP-binding</keyword>
<keyword id="KW-0963">Cytoplasm</keyword>
<keyword id="KW-0227">DNA damage</keyword>
<keyword id="KW-0228">DNA excision</keyword>
<keyword id="KW-0234">DNA repair</keyword>
<keyword id="KW-0267">Excision nuclease</keyword>
<keyword id="KW-0347">Helicase</keyword>
<keyword id="KW-0378">Hydrolase</keyword>
<keyword id="KW-0547">Nucleotide-binding</keyword>
<keyword id="KW-0742">SOS response</keyword>
<accession>Q031G7</accession>
<proteinExistence type="inferred from homology"/>
<sequence>MAIERITDNKFELVSKYDPAGDQGQAISELVENIENGEKAQILRGATGTGKTYTMSQVIAQTGKPTLVMAHNKTLAGQLYSEFKEFFPNNAVEYFVSYYDYYQPEAYVPSSDTYIEKDSSVNDEIDKLRHSATSSLLERNDVIVVASVSCIYGLGSPKEYQDSVVSLRPGQEISRDQLLNDLVGIQFERNDIDFQRGCFRVRGDVVEVFPASRDEHAFRVEFFGDEIDRIREIEVLTGQVLGEVDHLAIFPATHFMTNDDRMEESIAKIEAELEAQLKVFRSEGKLLEAQRLEQRTNYDIEMLREMGYCNGVENYSRHMDGREEGEPPYTLLDFFPDDFMIMIDESHMTMGQVKGMYNGDRARKEMLCNYGFRLPSALDNRPLKREEFESHVHQIVYVSATPGDYEMEQTDTIVEQIIRPTGLLDPVVEVRPMMGQIDDLVGEIHKRAEKNERVFVTTLTKKMSEDLTAYFKEMGIKVKYMHSDIKTLERTEIIRDLRLGVFDVLVGINLLREGIDVPEVSLVAILDADKEGFLRNERGLIQTIGRAARNSEGHVILYSDMAKALDENDPADKEILDSGYYTEYEGQKYKITRSMKHAMDETARRRDIQMAYNEEHGITPQTIKKEIRDLIAITKKTDSGELEEVDASAMNKKERKALVKKLEKEMQQAAAALDFEGAAQLRDMVLELRAMD</sequence>
<gene>
    <name evidence="1" type="primary">uvrB</name>
    <name type="ordered locus">LACR_0583</name>
</gene>
<name>UVRB_LACLS</name>
<dbReference type="EMBL" id="CP000425">
    <property type="protein sequence ID" value="ABJ72155.1"/>
    <property type="molecule type" value="Genomic_DNA"/>
</dbReference>
<dbReference type="RefSeq" id="WP_011675573.1">
    <property type="nucleotide sequence ID" value="NC_008527.1"/>
</dbReference>
<dbReference type="SMR" id="Q031G7"/>
<dbReference type="GeneID" id="61108849"/>
<dbReference type="KEGG" id="llc:LACR_0583"/>
<dbReference type="HOGENOM" id="CLU_009621_2_1_9"/>
<dbReference type="Proteomes" id="UP000000240">
    <property type="component" value="Chromosome"/>
</dbReference>
<dbReference type="GO" id="GO:0005737">
    <property type="term" value="C:cytoplasm"/>
    <property type="evidence" value="ECO:0007669"/>
    <property type="project" value="UniProtKB-SubCell"/>
</dbReference>
<dbReference type="GO" id="GO:0009380">
    <property type="term" value="C:excinuclease repair complex"/>
    <property type="evidence" value="ECO:0007669"/>
    <property type="project" value="InterPro"/>
</dbReference>
<dbReference type="GO" id="GO:0005524">
    <property type="term" value="F:ATP binding"/>
    <property type="evidence" value="ECO:0007669"/>
    <property type="project" value="UniProtKB-UniRule"/>
</dbReference>
<dbReference type="GO" id="GO:0016887">
    <property type="term" value="F:ATP hydrolysis activity"/>
    <property type="evidence" value="ECO:0007669"/>
    <property type="project" value="InterPro"/>
</dbReference>
<dbReference type="GO" id="GO:0003677">
    <property type="term" value="F:DNA binding"/>
    <property type="evidence" value="ECO:0007669"/>
    <property type="project" value="UniProtKB-UniRule"/>
</dbReference>
<dbReference type="GO" id="GO:0009381">
    <property type="term" value="F:excinuclease ABC activity"/>
    <property type="evidence" value="ECO:0007669"/>
    <property type="project" value="UniProtKB-UniRule"/>
</dbReference>
<dbReference type="GO" id="GO:0004386">
    <property type="term" value="F:helicase activity"/>
    <property type="evidence" value="ECO:0007669"/>
    <property type="project" value="UniProtKB-KW"/>
</dbReference>
<dbReference type="GO" id="GO:0006289">
    <property type="term" value="P:nucleotide-excision repair"/>
    <property type="evidence" value="ECO:0007669"/>
    <property type="project" value="UniProtKB-UniRule"/>
</dbReference>
<dbReference type="GO" id="GO:0009432">
    <property type="term" value="P:SOS response"/>
    <property type="evidence" value="ECO:0007669"/>
    <property type="project" value="UniProtKB-UniRule"/>
</dbReference>
<dbReference type="CDD" id="cd17916">
    <property type="entry name" value="DEXHc_UvrB"/>
    <property type="match status" value="1"/>
</dbReference>
<dbReference type="CDD" id="cd18790">
    <property type="entry name" value="SF2_C_UvrB"/>
    <property type="match status" value="1"/>
</dbReference>
<dbReference type="Gene3D" id="3.40.50.300">
    <property type="entry name" value="P-loop containing nucleotide triphosphate hydrolases"/>
    <property type="match status" value="3"/>
</dbReference>
<dbReference type="Gene3D" id="4.10.860.10">
    <property type="entry name" value="UVR domain"/>
    <property type="match status" value="1"/>
</dbReference>
<dbReference type="HAMAP" id="MF_00204">
    <property type="entry name" value="UvrB"/>
    <property type="match status" value="1"/>
</dbReference>
<dbReference type="InterPro" id="IPR006935">
    <property type="entry name" value="Helicase/UvrB_N"/>
</dbReference>
<dbReference type="InterPro" id="IPR014001">
    <property type="entry name" value="Helicase_ATP-bd"/>
</dbReference>
<dbReference type="InterPro" id="IPR001650">
    <property type="entry name" value="Helicase_C-like"/>
</dbReference>
<dbReference type="InterPro" id="IPR027417">
    <property type="entry name" value="P-loop_NTPase"/>
</dbReference>
<dbReference type="InterPro" id="IPR001943">
    <property type="entry name" value="UVR_dom"/>
</dbReference>
<dbReference type="InterPro" id="IPR036876">
    <property type="entry name" value="UVR_dom_sf"/>
</dbReference>
<dbReference type="InterPro" id="IPR004807">
    <property type="entry name" value="UvrB"/>
</dbReference>
<dbReference type="InterPro" id="IPR041471">
    <property type="entry name" value="UvrB_inter"/>
</dbReference>
<dbReference type="InterPro" id="IPR024759">
    <property type="entry name" value="UvrB_YAD/RRR_dom"/>
</dbReference>
<dbReference type="NCBIfam" id="NF003673">
    <property type="entry name" value="PRK05298.1"/>
    <property type="match status" value="1"/>
</dbReference>
<dbReference type="NCBIfam" id="TIGR00631">
    <property type="entry name" value="uvrb"/>
    <property type="match status" value="1"/>
</dbReference>
<dbReference type="PANTHER" id="PTHR24029">
    <property type="entry name" value="UVRABC SYSTEM PROTEIN B"/>
    <property type="match status" value="1"/>
</dbReference>
<dbReference type="PANTHER" id="PTHR24029:SF0">
    <property type="entry name" value="UVRABC SYSTEM PROTEIN B"/>
    <property type="match status" value="1"/>
</dbReference>
<dbReference type="Pfam" id="PF00271">
    <property type="entry name" value="Helicase_C"/>
    <property type="match status" value="1"/>
</dbReference>
<dbReference type="Pfam" id="PF04851">
    <property type="entry name" value="ResIII"/>
    <property type="match status" value="1"/>
</dbReference>
<dbReference type="Pfam" id="PF02151">
    <property type="entry name" value="UVR"/>
    <property type="match status" value="1"/>
</dbReference>
<dbReference type="Pfam" id="PF12344">
    <property type="entry name" value="UvrB"/>
    <property type="match status" value="1"/>
</dbReference>
<dbReference type="Pfam" id="PF17757">
    <property type="entry name" value="UvrB_inter"/>
    <property type="match status" value="1"/>
</dbReference>
<dbReference type="SMART" id="SM00487">
    <property type="entry name" value="DEXDc"/>
    <property type="match status" value="1"/>
</dbReference>
<dbReference type="SMART" id="SM00490">
    <property type="entry name" value="HELICc"/>
    <property type="match status" value="1"/>
</dbReference>
<dbReference type="SUPFAM" id="SSF46600">
    <property type="entry name" value="C-terminal UvrC-binding domain of UvrB"/>
    <property type="match status" value="1"/>
</dbReference>
<dbReference type="SUPFAM" id="SSF52540">
    <property type="entry name" value="P-loop containing nucleoside triphosphate hydrolases"/>
    <property type="match status" value="2"/>
</dbReference>
<dbReference type="PROSITE" id="PS51192">
    <property type="entry name" value="HELICASE_ATP_BIND_1"/>
    <property type="match status" value="1"/>
</dbReference>
<dbReference type="PROSITE" id="PS51194">
    <property type="entry name" value="HELICASE_CTER"/>
    <property type="match status" value="1"/>
</dbReference>
<dbReference type="PROSITE" id="PS50151">
    <property type="entry name" value="UVR"/>
    <property type="match status" value="1"/>
</dbReference>
<protein>
    <recommendedName>
        <fullName evidence="1">UvrABC system protein B</fullName>
        <shortName evidence="1">Protein UvrB</shortName>
    </recommendedName>
    <alternativeName>
        <fullName evidence="1">Excinuclease ABC subunit B</fullName>
    </alternativeName>
</protein>
<organism>
    <name type="scientific">Lactococcus lactis subsp. cremoris (strain SK11)</name>
    <dbReference type="NCBI Taxonomy" id="272622"/>
    <lineage>
        <taxon>Bacteria</taxon>
        <taxon>Bacillati</taxon>
        <taxon>Bacillota</taxon>
        <taxon>Bacilli</taxon>
        <taxon>Lactobacillales</taxon>
        <taxon>Streptococcaceae</taxon>
        <taxon>Lactococcus</taxon>
        <taxon>Lactococcus cremoris subsp. cremoris</taxon>
    </lineage>
</organism>